<protein>
    <recommendedName>
        <fullName>Protein THEM6</fullName>
    </recommendedName>
</protein>
<comment type="subcellular location">
    <subcellularLocation>
        <location evidence="2">Secreted</location>
    </subcellularLocation>
</comment>
<comment type="similarity">
    <text evidence="2">Belongs to the THEM6 family.</text>
</comment>
<keyword id="KW-0325">Glycoprotein</keyword>
<keyword id="KW-1185">Reference proteome</keyword>
<keyword id="KW-0964">Secreted</keyword>
<keyword id="KW-0732">Signal</keyword>
<dbReference type="EMBL" id="BC158222">
    <property type="protein sequence ID" value="AAI58223.1"/>
    <property type="molecule type" value="mRNA"/>
</dbReference>
<dbReference type="RefSeq" id="NP_001119977.1">
    <property type="nucleotide sequence ID" value="NM_001126505.1"/>
</dbReference>
<dbReference type="SMR" id="B0BLZ5"/>
<dbReference type="FunCoup" id="B0BLZ5">
    <property type="interactions" value="305"/>
</dbReference>
<dbReference type="GlyCosmos" id="B0BLZ5">
    <property type="glycosylation" value="1 site, No reported glycans"/>
</dbReference>
<dbReference type="GeneID" id="100144931"/>
<dbReference type="KEGG" id="xtr:100144931"/>
<dbReference type="AGR" id="Xenbase:XB-GENE-6455857"/>
<dbReference type="CTD" id="51337"/>
<dbReference type="Xenbase" id="XB-GENE-6455857">
    <property type="gene designation" value="them6"/>
</dbReference>
<dbReference type="InParanoid" id="B0BLZ5"/>
<dbReference type="OMA" id="MEHRFLR"/>
<dbReference type="OrthoDB" id="265761at2759"/>
<dbReference type="Proteomes" id="UP000008143">
    <property type="component" value="Chromosome 6"/>
</dbReference>
<dbReference type="GO" id="GO:0005576">
    <property type="term" value="C:extracellular region"/>
    <property type="evidence" value="ECO:0007669"/>
    <property type="project" value="UniProtKB-SubCell"/>
</dbReference>
<dbReference type="CDD" id="cd00586">
    <property type="entry name" value="4HBT"/>
    <property type="match status" value="1"/>
</dbReference>
<dbReference type="Gene3D" id="3.10.129.10">
    <property type="entry name" value="Hotdog Thioesterase"/>
    <property type="match status" value="1"/>
</dbReference>
<dbReference type="InterPro" id="IPR029069">
    <property type="entry name" value="HotDog_dom_sf"/>
</dbReference>
<dbReference type="InterPro" id="IPR051490">
    <property type="entry name" value="THEM6_lcsJ_thioesterase"/>
</dbReference>
<dbReference type="PANTHER" id="PTHR12475">
    <property type="match status" value="1"/>
</dbReference>
<dbReference type="PANTHER" id="PTHR12475:SF4">
    <property type="entry name" value="PROTEIN THEM6"/>
    <property type="match status" value="1"/>
</dbReference>
<dbReference type="Pfam" id="PF13279">
    <property type="entry name" value="4HBT_2"/>
    <property type="match status" value="1"/>
</dbReference>
<dbReference type="SUPFAM" id="SSF54637">
    <property type="entry name" value="Thioesterase/thiol ester dehydrase-isomerase"/>
    <property type="match status" value="1"/>
</dbReference>
<name>THEM6_XENTR</name>
<organism>
    <name type="scientific">Xenopus tropicalis</name>
    <name type="common">Western clawed frog</name>
    <name type="synonym">Silurana tropicalis</name>
    <dbReference type="NCBI Taxonomy" id="8364"/>
    <lineage>
        <taxon>Eukaryota</taxon>
        <taxon>Metazoa</taxon>
        <taxon>Chordata</taxon>
        <taxon>Craniata</taxon>
        <taxon>Vertebrata</taxon>
        <taxon>Euteleostomi</taxon>
        <taxon>Amphibia</taxon>
        <taxon>Batrachia</taxon>
        <taxon>Anura</taxon>
        <taxon>Pipoidea</taxon>
        <taxon>Pipidae</taxon>
        <taxon>Xenopodinae</taxon>
        <taxon>Xenopus</taxon>
        <taxon>Silurana</taxon>
    </lineage>
</organism>
<gene>
    <name type="primary">them6</name>
</gene>
<reference key="1">
    <citation type="submission" date="2008-01" db="EMBL/GenBank/DDBJ databases">
        <authorList>
            <consortium name="NIH - Xenopus Gene Collection (XGC) project"/>
        </authorList>
    </citation>
    <scope>NUCLEOTIDE SEQUENCE [LARGE SCALE MRNA]</scope>
    <source>
        <tissue>Brain</tissue>
    </source>
</reference>
<sequence>MLFLVLLSGLIAAIFSLLDVWYFVRGALVVLKARIQPVVKDLLKEHCYGGIVLPHDLDFLFHMNNSRYLREADFARFAHFTRSGLFQAVRYLGAGMVMAGSTIRYRRSLRLLETFEIRTRLLCWDDKAFYVEQRFVAPKDDFVCAVLLSRQHVIGNSPDKVVQSMCKRKVESPEYPEEVAHWIKYNDASSQQLRAESAVTNSAKDE</sequence>
<accession>B0BLZ5</accession>
<evidence type="ECO:0000255" key="1"/>
<evidence type="ECO:0000305" key="2"/>
<proteinExistence type="evidence at transcript level"/>
<feature type="signal peptide" evidence="1">
    <location>
        <begin position="1"/>
        <end position="26"/>
    </location>
</feature>
<feature type="chain" id="PRO_0000352884" description="Protein THEM6">
    <location>
        <begin position="27"/>
        <end position="206"/>
    </location>
</feature>
<feature type="glycosylation site" description="N-linked (GlcNAc...) asparagine" evidence="1">
    <location>
        <position position="64"/>
    </location>
</feature>